<comment type="function">
    <text evidence="1">Involved in the catabolism of oxalate and in the adapatation to low pH via the induction of the oxalate-dependent acid tolerance response (ATR). Catalyzes the transfer of the CoA moiety from formyl-CoA to oxalate (By similarity).</text>
</comment>
<comment type="catalytic activity">
    <reaction evidence="2">
        <text>formyl-CoA + oxalate = oxalyl-CoA + formate</text>
        <dbReference type="Rhea" id="RHEA:16545"/>
        <dbReference type="ChEBI" id="CHEBI:15740"/>
        <dbReference type="ChEBI" id="CHEBI:30623"/>
        <dbReference type="ChEBI" id="CHEBI:57376"/>
        <dbReference type="ChEBI" id="CHEBI:57388"/>
        <dbReference type="EC" id="2.8.3.16"/>
    </reaction>
</comment>
<comment type="pathway">
    <text evidence="2">Metabolic intermediate degradation; oxalate degradation; CO(2) and formate from oxalate: step 1/2.</text>
</comment>
<comment type="subunit">
    <text evidence="2">Homodimer.</text>
</comment>
<comment type="similarity">
    <text evidence="2">Belongs to the CoA-transferase III family. Frc subfamily.</text>
</comment>
<protein>
    <recommendedName>
        <fullName>Formyl-CoA:oxalate CoA-transferase</fullName>
        <shortName>FCOCT</shortName>
        <ecNumber evidence="2">2.8.3.16</ecNumber>
    </recommendedName>
    <alternativeName>
        <fullName evidence="2">Formyl-coenzyme A transferase</fullName>
        <shortName evidence="2">Formyl-CoA transferase</shortName>
    </alternativeName>
</protein>
<dbReference type="EC" id="2.8.3.16" evidence="2"/>
<dbReference type="EMBL" id="CU928145">
    <property type="protein sequence ID" value="CAU98534.1"/>
    <property type="molecule type" value="Genomic_DNA"/>
</dbReference>
<dbReference type="RefSeq" id="WP_000106759.1">
    <property type="nucleotide sequence ID" value="NZ_CP028304.1"/>
</dbReference>
<dbReference type="SMR" id="B7LBS7"/>
<dbReference type="GeneID" id="75202557"/>
<dbReference type="KEGG" id="eck:EC55989_2667"/>
<dbReference type="HOGENOM" id="CLU_033975_2_1_6"/>
<dbReference type="UniPathway" id="UPA00540">
    <property type="reaction ID" value="UER00598"/>
</dbReference>
<dbReference type="Proteomes" id="UP000000746">
    <property type="component" value="Chromosome"/>
</dbReference>
<dbReference type="GO" id="GO:0033608">
    <property type="term" value="F:formyl-CoA transferase activity"/>
    <property type="evidence" value="ECO:0007669"/>
    <property type="project" value="UniProtKB-EC"/>
</dbReference>
<dbReference type="GO" id="GO:0033611">
    <property type="term" value="P:oxalate catabolic process"/>
    <property type="evidence" value="ECO:0007669"/>
    <property type="project" value="UniProtKB-UniRule"/>
</dbReference>
<dbReference type="Gene3D" id="3.40.50.10540">
    <property type="entry name" value="Crotonobetainyl-coa:carnitine coa-transferase, domain 1"/>
    <property type="match status" value="1"/>
</dbReference>
<dbReference type="Gene3D" id="3.30.1540.10">
    <property type="entry name" value="formyl-coa transferase, domain 3"/>
    <property type="match status" value="1"/>
</dbReference>
<dbReference type="HAMAP" id="MF_00742">
    <property type="entry name" value="Formyl_CoA_transfer"/>
    <property type="match status" value="1"/>
</dbReference>
<dbReference type="InterPro" id="IPR050483">
    <property type="entry name" value="CoA-transferase_III_domain"/>
</dbReference>
<dbReference type="InterPro" id="IPR003673">
    <property type="entry name" value="CoA-Trfase_fam_III"/>
</dbReference>
<dbReference type="InterPro" id="IPR044855">
    <property type="entry name" value="CoA-Trfase_III_dom3_sf"/>
</dbReference>
<dbReference type="InterPro" id="IPR023606">
    <property type="entry name" value="CoA-Trfase_III_dom_1_sf"/>
</dbReference>
<dbReference type="InterPro" id="IPR017659">
    <property type="entry name" value="Formyl_CoA_transfer"/>
</dbReference>
<dbReference type="NCBIfam" id="TIGR03253">
    <property type="entry name" value="oxalate_frc"/>
    <property type="match status" value="1"/>
</dbReference>
<dbReference type="NCBIfam" id="NF003809">
    <property type="entry name" value="PRK05398.1"/>
    <property type="match status" value="1"/>
</dbReference>
<dbReference type="PANTHER" id="PTHR48207">
    <property type="entry name" value="SUCCINATE--HYDROXYMETHYLGLUTARATE COA-TRANSFERASE"/>
    <property type="match status" value="1"/>
</dbReference>
<dbReference type="PANTHER" id="PTHR48207:SF3">
    <property type="entry name" value="SUCCINATE--HYDROXYMETHYLGLUTARATE COA-TRANSFERASE"/>
    <property type="match status" value="1"/>
</dbReference>
<dbReference type="Pfam" id="PF02515">
    <property type="entry name" value="CoA_transf_3"/>
    <property type="match status" value="1"/>
</dbReference>
<dbReference type="SUPFAM" id="SSF89796">
    <property type="entry name" value="CoA-transferase family III (CaiB/BaiF)"/>
    <property type="match status" value="1"/>
</dbReference>
<accession>B7LBS7</accession>
<name>FCTA_ECO55</name>
<evidence type="ECO:0000250" key="1"/>
<evidence type="ECO:0000255" key="2">
    <source>
        <dbReference type="HAMAP-Rule" id="MF_00742"/>
    </source>
</evidence>
<organism>
    <name type="scientific">Escherichia coli (strain 55989 / EAEC)</name>
    <dbReference type="NCBI Taxonomy" id="585055"/>
    <lineage>
        <taxon>Bacteria</taxon>
        <taxon>Pseudomonadati</taxon>
        <taxon>Pseudomonadota</taxon>
        <taxon>Gammaproteobacteria</taxon>
        <taxon>Enterobacterales</taxon>
        <taxon>Enterobacteriaceae</taxon>
        <taxon>Escherichia</taxon>
    </lineage>
</organism>
<sequence length="416" mass="45828">MSTPLQGIKVLDFTGVQSGPSCTQMLAWFGADVIKIERPGVGDVTRHQLRDIPDIDALYFTMLNSNKRSIELNTKTAEGKEVMEKLIREADILVENFHPGAIDHMGFTWEHIQEINPRLIFGSIKGFDECSPYVNVKAYENVAQAAGGAASTTGFWDGPPLVSAAALGDSNTGMHLLIGLLAALLHREKTGRGQRVTMSMQDAVLNLCRVKLRDQQRLDKLGYLEEYPQYPNGTFGDAVPRGGNAGGGGQPGWILKCKGWETDPNAYIYFTIQEQNWENTCKAIGKPEWITDPAYSTAHARQPHIFDIFAEIEKYTVTIDKHEAVAYLTQFDIPCAPVLSMKEISLDPSLRQSGSVVEVEQPLRGKYLTVGCPMKFSAFTPDIKAAPLLGEHTAAVLQELGYSDDEIAAMKQNHAI</sequence>
<gene>
    <name evidence="2" type="primary">frc</name>
    <name type="ordered locus">EC55989_2667</name>
</gene>
<feature type="chain" id="PRO_1000148310" description="Formyl-CoA:oxalate CoA-transferase">
    <location>
        <begin position="1"/>
        <end position="416"/>
    </location>
</feature>
<feature type="active site" description="Nucleophile" evidence="2">
    <location>
        <position position="169"/>
    </location>
</feature>
<feature type="binding site" evidence="1">
    <location>
        <begin position="17"/>
        <end position="18"/>
    </location>
    <ligand>
        <name>CoA</name>
        <dbReference type="ChEBI" id="CHEBI:57287"/>
    </ligand>
</feature>
<feature type="binding site" evidence="2">
    <location>
        <position position="38"/>
    </location>
    <ligand>
        <name>CoA</name>
        <dbReference type="ChEBI" id="CHEBI:57287"/>
    </ligand>
</feature>
<feature type="binding site" evidence="1">
    <location>
        <begin position="72"/>
        <end position="75"/>
    </location>
    <ligand>
        <name>CoA</name>
        <dbReference type="ChEBI" id="CHEBI:57287"/>
    </ligand>
</feature>
<feature type="binding site" evidence="1">
    <location>
        <begin position="96"/>
        <end position="98"/>
    </location>
    <ligand>
        <name>CoA</name>
        <dbReference type="ChEBI" id="CHEBI:57287"/>
    </ligand>
</feature>
<feature type="binding site" evidence="2">
    <location>
        <position position="104"/>
    </location>
    <ligand>
        <name>CoA</name>
        <dbReference type="ChEBI" id="CHEBI:57287"/>
    </ligand>
</feature>
<feature type="binding site" evidence="1">
    <location>
        <begin position="137"/>
        <end position="140"/>
    </location>
    <ligand>
        <name>CoA</name>
        <dbReference type="ChEBI" id="CHEBI:57287"/>
    </ligand>
</feature>
<feature type="binding site" evidence="1">
    <location>
        <begin position="248"/>
        <end position="250"/>
    </location>
    <ligand>
        <name>substrate</name>
    </ligand>
</feature>
<feature type="binding site" evidence="1">
    <location>
        <begin position="273"/>
        <end position="275"/>
    </location>
    <ligand>
        <name>CoA</name>
        <dbReference type="ChEBI" id="CHEBI:57287"/>
    </ligand>
</feature>
<reference key="1">
    <citation type="journal article" date="2009" name="PLoS Genet.">
        <title>Organised genome dynamics in the Escherichia coli species results in highly diverse adaptive paths.</title>
        <authorList>
            <person name="Touchon M."/>
            <person name="Hoede C."/>
            <person name="Tenaillon O."/>
            <person name="Barbe V."/>
            <person name="Baeriswyl S."/>
            <person name="Bidet P."/>
            <person name="Bingen E."/>
            <person name="Bonacorsi S."/>
            <person name="Bouchier C."/>
            <person name="Bouvet O."/>
            <person name="Calteau A."/>
            <person name="Chiapello H."/>
            <person name="Clermont O."/>
            <person name="Cruveiller S."/>
            <person name="Danchin A."/>
            <person name="Diard M."/>
            <person name="Dossat C."/>
            <person name="Karoui M.E."/>
            <person name="Frapy E."/>
            <person name="Garry L."/>
            <person name="Ghigo J.M."/>
            <person name="Gilles A.M."/>
            <person name="Johnson J."/>
            <person name="Le Bouguenec C."/>
            <person name="Lescat M."/>
            <person name="Mangenot S."/>
            <person name="Martinez-Jehanne V."/>
            <person name="Matic I."/>
            <person name="Nassif X."/>
            <person name="Oztas S."/>
            <person name="Petit M.A."/>
            <person name="Pichon C."/>
            <person name="Rouy Z."/>
            <person name="Ruf C.S."/>
            <person name="Schneider D."/>
            <person name="Tourret J."/>
            <person name="Vacherie B."/>
            <person name="Vallenet D."/>
            <person name="Medigue C."/>
            <person name="Rocha E.P.C."/>
            <person name="Denamur E."/>
        </authorList>
    </citation>
    <scope>NUCLEOTIDE SEQUENCE [LARGE SCALE GENOMIC DNA]</scope>
    <source>
        <strain>55989 / EAEC</strain>
    </source>
</reference>
<keyword id="KW-1185">Reference proteome</keyword>
<keyword id="KW-0808">Transferase</keyword>
<proteinExistence type="inferred from homology"/>